<gene>
    <name type="primary">CIPK12</name>
    <name type="ordered locus">Os01g0759400</name>
    <name type="ordered locus">LOC_Os01g55450</name>
    <name type="ORF">B1131G08.38</name>
    <name type="ORF">P0460E08.9</name>
</gene>
<proteinExistence type="evidence at protein level"/>
<sequence length="540" mass="59808">MLMATVSPARREPTPQAVRASPMPSAAAALVRRGGGGSGGTVLGKYELGRVLGQGSFAKVYQARHLETDECVAIKVLDKEKAVKGGMVHLVKREINVLRRVRHPNIVQLFEVMASKTKIYFVMEYVRGGELFSRVSKGRLREDTARRYFQQLVSAVDFCHARGVFHRDLKPENLLVDENGDLKVSDFGLAAGPDQFDPDGLLHTFCGTPAYVAPEVLRRRGYDGAKADIWSCGVILFALMAGYLPFHDHNIMVLYRKIYNGEFRCPRWFSKDFTRLITRLLDANPKTRITVPEIIESDWFKKGYKPVKFYIEDDKLYNLSDDVLNLEPADPVPPPLGLAPPVPPPPQGDDPDGSGSESDSSVVSCPATLSTGESQRVRGSLPRPASLNAFDIISFSKGFNLSGLFEERGNEIRFVSGEPMSDIVKKLEEIAKVKSFTVRRKDWRVSIEGTREGVKGPLTIGAEIFELTPSLVVVEVKRKAGDNEEYEDFCNMELKPGMQHLVHQMLPAPNGTPVSEKVERSSSLQAPLTLKLIGTEGSMS</sequence>
<name>CIPKC_ORYSJ</name>
<feature type="chain" id="PRO_0000338370" description="CBL-interacting protein kinase 12">
    <location>
        <begin position="1"/>
        <end position="540"/>
    </location>
</feature>
<feature type="domain" description="Protein kinase" evidence="2">
    <location>
        <begin position="46"/>
        <end position="300"/>
    </location>
</feature>
<feature type="domain" description="NAF" evidence="3">
    <location>
        <begin position="370"/>
        <end position="406"/>
    </location>
</feature>
<feature type="region of interest" description="Disordered" evidence="5">
    <location>
        <begin position="1"/>
        <end position="23"/>
    </location>
</feature>
<feature type="region of interest" description="Activation loop" evidence="1">
    <location>
        <begin position="186"/>
        <end position="215"/>
    </location>
</feature>
<feature type="region of interest" description="Disordered" evidence="5">
    <location>
        <begin position="333"/>
        <end position="380"/>
    </location>
</feature>
<feature type="region of interest" description="PPI" evidence="1">
    <location>
        <begin position="409"/>
        <end position="438"/>
    </location>
</feature>
<feature type="compositionally biased region" description="Pro residues" evidence="5">
    <location>
        <begin position="333"/>
        <end position="348"/>
    </location>
</feature>
<feature type="compositionally biased region" description="Low complexity" evidence="5">
    <location>
        <begin position="353"/>
        <end position="364"/>
    </location>
</feature>
<feature type="active site" description="Proton acceptor" evidence="2 4">
    <location>
        <position position="168"/>
    </location>
</feature>
<feature type="binding site" evidence="2">
    <location>
        <begin position="52"/>
        <end position="60"/>
    </location>
    <ligand>
        <name>ATP</name>
        <dbReference type="ChEBI" id="CHEBI:30616"/>
    </ligand>
</feature>
<feature type="binding site" evidence="2">
    <location>
        <position position="75"/>
    </location>
    <ligand>
        <name>ATP</name>
        <dbReference type="ChEBI" id="CHEBI:30616"/>
    </ligand>
</feature>
<accession>Q5JLS2</accession>
<accession>Q7F595</accession>
<accession>Q9SLZ5</accession>
<protein>
    <recommendedName>
        <fullName>CBL-interacting protein kinase 12</fullName>
        <ecNumber>2.7.11.1</ecNumber>
    </recommendedName>
    <alternativeName>
        <fullName>OsCIPK12</fullName>
    </alternativeName>
    <alternativeName>
        <fullName>OsPK7</fullName>
    </alternativeName>
</protein>
<keyword id="KW-0067">ATP-binding</keyword>
<keyword id="KW-0418">Kinase</keyword>
<keyword id="KW-0464">Manganese</keyword>
<keyword id="KW-0547">Nucleotide-binding</keyword>
<keyword id="KW-1185">Reference proteome</keyword>
<keyword id="KW-0723">Serine/threonine-protein kinase</keyword>
<keyword id="KW-0808">Transferase</keyword>
<comment type="function">
    <text evidence="7">Involved in drought stress tolerance. CIPK serine-threonine protein kinases interact with CBL proteins. Binding of a CBL protein to the regulatory NAF domain of CIPK protein lead to the activation of the kinase in a calcium-dependent manner.</text>
</comment>
<comment type="catalytic activity">
    <reaction>
        <text>L-seryl-[protein] + ATP = O-phospho-L-seryl-[protein] + ADP + H(+)</text>
        <dbReference type="Rhea" id="RHEA:17989"/>
        <dbReference type="Rhea" id="RHEA-COMP:9863"/>
        <dbReference type="Rhea" id="RHEA-COMP:11604"/>
        <dbReference type="ChEBI" id="CHEBI:15378"/>
        <dbReference type="ChEBI" id="CHEBI:29999"/>
        <dbReference type="ChEBI" id="CHEBI:30616"/>
        <dbReference type="ChEBI" id="CHEBI:83421"/>
        <dbReference type="ChEBI" id="CHEBI:456216"/>
        <dbReference type="EC" id="2.7.11.1"/>
    </reaction>
</comment>
<comment type="catalytic activity">
    <reaction>
        <text>L-threonyl-[protein] + ATP = O-phospho-L-threonyl-[protein] + ADP + H(+)</text>
        <dbReference type="Rhea" id="RHEA:46608"/>
        <dbReference type="Rhea" id="RHEA-COMP:11060"/>
        <dbReference type="Rhea" id="RHEA-COMP:11605"/>
        <dbReference type="ChEBI" id="CHEBI:15378"/>
        <dbReference type="ChEBI" id="CHEBI:30013"/>
        <dbReference type="ChEBI" id="CHEBI:30616"/>
        <dbReference type="ChEBI" id="CHEBI:61977"/>
        <dbReference type="ChEBI" id="CHEBI:456216"/>
        <dbReference type="EC" id="2.7.11.1"/>
    </reaction>
</comment>
<comment type="cofactor">
    <cofactor evidence="6">
        <name>Mg(2+)</name>
        <dbReference type="ChEBI" id="CHEBI:18420"/>
    </cofactor>
</comment>
<comment type="tissue specificity">
    <text evidence="6">Expressed at low levels in leaf blades.</text>
</comment>
<comment type="induction">
    <text evidence="7">By drought stress and abscisic acid (ABA).</text>
</comment>
<comment type="domain">
    <text evidence="1">The activation loop within the kinase domain is the target of phosphorylation/activation by upstream protein kinases. The PPI motif mediates the interaction with the ABI (abscisic acid-insensitive) phosphatases (By similarity).</text>
</comment>
<comment type="PTM">
    <text>Autophosphorylated.</text>
</comment>
<comment type="similarity">
    <text evidence="8">Belongs to the protein kinase superfamily. CAMK Ser/Thr protein kinase family. SNF1 subfamily.</text>
</comment>
<comment type="sequence caution" evidence="8">
    <conflict type="erroneous gene model prediction">
        <sequence resource="EMBL-CDS" id="BAA83689"/>
    </conflict>
</comment>
<comment type="sequence caution" evidence="8">
    <conflict type="erroneous gene model prediction">
        <sequence resource="EMBL-CDS" id="BAB61201"/>
    </conflict>
</comment>
<reference key="1">
    <citation type="journal article" date="2000" name="Mol. Gen. Genet.">
        <title>Diverse response of rice and maize genes encoding homologs of WPK4, an SNF1-related protein kinase from wheat, to light, nutrients, low temperature and cytokinins.</title>
        <authorList>
            <person name="Ohba H."/>
            <person name="Steward N."/>
            <person name="Kawasaki S."/>
            <person name="Berberich T."/>
            <person name="Ikeda Y."/>
            <person name="Koizumi N."/>
            <person name="Kusano T."/>
            <person name="Sano H."/>
        </authorList>
    </citation>
    <scope>NUCLEOTIDE SEQUENCE [GENOMIC DNA]</scope>
    <scope>COFACTOR</scope>
    <scope>TISSUE SPECIFICITY</scope>
    <scope>AUTOPHOSPHORYLATION</scope>
    <source>
        <strain>cv. Toride</strain>
    </source>
</reference>
<reference key="2">
    <citation type="journal article" date="2002" name="Nature">
        <title>The genome sequence and structure of rice chromosome 1.</title>
        <authorList>
            <person name="Sasaki T."/>
            <person name="Matsumoto T."/>
            <person name="Yamamoto K."/>
            <person name="Sakata K."/>
            <person name="Baba T."/>
            <person name="Katayose Y."/>
            <person name="Wu J."/>
            <person name="Niimura Y."/>
            <person name="Cheng Z."/>
            <person name="Nagamura Y."/>
            <person name="Antonio B.A."/>
            <person name="Kanamori H."/>
            <person name="Hosokawa S."/>
            <person name="Masukawa M."/>
            <person name="Arikawa K."/>
            <person name="Chiden Y."/>
            <person name="Hayashi M."/>
            <person name="Okamoto M."/>
            <person name="Ando T."/>
            <person name="Aoki H."/>
            <person name="Arita K."/>
            <person name="Hamada M."/>
            <person name="Harada C."/>
            <person name="Hijishita S."/>
            <person name="Honda M."/>
            <person name="Ichikawa Y."/>
            <person name="Idonuma A."/>
            <person name="Iijima M."/>
            <person name="Ikeda M."/>
            <person name="Ikeno M."/>
            <person name="Ito S."/>
            <person name="Ito T."/>
            <person name="Ito Y."/>
            <person name="Ito Y."/>
            <person name="Iwabuchi A."/>
            <person name="Kamiya K."/>
            <person name="Karasawa W."/>
            <person name="Katagiri S."/>
            <person name="Kikuta A."/>
            <person name="Kobayashi N."/>
            <person name="Kono I."/>
            <person name="Machita K."/>
            <person name="Maehara T."/>
            <person name="Mizuno H."/>
            <person name="Mizubayashi T."/>
            <person name="Mukai Y."/>
            <person name="Nagasaki H."/>
            <person name="Nakashima M."/>
            <person name="Nakama Y."/>
            <person name="Nakamichi Y."/>
            <person name="Nakamura M."/>
            <person name="Namiki N."/>
            <person name="Negishi M."/>
            <person name="Ohta I."/>
            <person name="Ono N."/>
            <person name="Saji S."/>
            <person name="Sakai K."/>
            <person name="Shibata M."/>
            <person name="Shimokawa T."/>
            <person name="Shomura A."/>
            <person name="Song J."/>
            <person name="Takazaki Y."/>
            <person name="Terasawa K."/>
            <person name="Tsuji K."/>
            <person name="Waki K."/>
            <person name="Yamagata H."/>
            <person name="Yamane H."/>
            <person name="Yoshiki S."/>
            <person name="Yoshihara R."/>
            <person name="Yukawa K."/>
            <person name="Zhong H."/>
            <person name="Iwama H."/>
            <person name="Endo T."/>
            <person name="Ito H."/>
            <person name="Hahn J.H."/>
            <person name="Kim H.-I."/>
            <person name="Eun M.-Y."/>
            <person name="Yano M."/>
            <person name="Jiang J."/>
            <person name="Gojobori T."/>
        </authorList>
    </citation>
    <scope>NUCLEOTIDE SEQUENCE [LARGE SCALE GENOMIC DNA]</scope>
    <source>
        <strain>cv. Nipponbare</strain>
    </source>
</reference>
<reference key="3">
    <citation type="journal article" date="2005" name="Nature">
        <title>The map-based sequence of the rice genome.</title>
        <authorList>
            <consortium name="International rice genome sequencing project (IRGSP)"/>
        </authorList>
    </citation>
    <scope>NUCLEOTIDE SEQUENCE [LARGE SCALE GENOMIC DNA]</scope>
    <source>
        <strain>cv. Nipponbare</strain>
    </source>
</reference>
<reference key="4">
    <citation type="journal article" date="2008" name="Nucleic Acids Res.">
        <title>The rice annotation project database (RAP-DB): 2008 update.</title>
        <authorList>
            <consortium name="The rice annotation project (RAP)"/>
        </authorList>
    </citation>
    <scope>GENOME REANNOTATION</scope>
    <source>
        <strain>cv. Nipponbare</strain>
    </source>
</reference>
<reference key="5">
    <citation type="journal article" date="2013" name="Rice">
        <title>Improvement of the Oryza sativa Nipponbare reference genome using next generation sequence and optical map data.</title>
        <authorList>
            <person name="Kawahara Y."/>
            <person name="de la Bastide M."/>
            <person name="Hamilton J.P."/>
            <person name="Kanamori H."/>
            <person name="McCombie W.R."/>
            <person name="Ouyang S."/>
            <person name="Schwartz D.C."/>
            <person name="Tanaka T."/>
            <person name="Wu J."/>
            <person name="Zhou S."/>
            <person name="Childs K.L."/>
            <person name="Davidson R.M."/>
            <person name="Lin H."/>
            <person name="Quesada-Ocampo L."/>
            <person name="Vaillancourt B."/>
            <person name="Sakai H."/>
            <person name="Lee S.S."/>
            <person name="Kim J."/>
            <person name="Numa H."/>
            <person name="Itoh T."/>
            <person name="Buell C.R."/>
            <person name="Matsumoto T."/>
        </authorList>
    </citation>
    <scope>GENOME REANNOTATION</scope>
    <source>
        <strain>cv. Nipponbare</strain>
    </source>
</reference>
<reference key="6">
    <citation type="journal article" date="2003" name="Science">
        <title>Collection, mapping, and annotation of over 28,000 cDNA clones from japonica rice.</title>
        <authorList>
            <consortium name="The rice full-length cDNA consortium"/>
        </authorList>
    </citation>
    <scope>NUCLEOTIDE SEQUENCE [LARGE SCALE MRNA]</scope>
    <source>
        <strain>cv. Nipponbare</strain>
    </source>
</reference>
<reference key="7">
    <citation type="journal article" date="2004" name="Plant Physiol.">
        <title>Calcium sensors and their interacting protein kinases: genomics of the Arabidopsis and rice CBL-CIPK signaling networks.</title>
        <authorList>
            <person name="Kolukisaoglu U."/>
            <person name="Weinl S."/>
            <person name="Blazevic D."/>
            <person name="Batistic O."/>
            <person name="Kudla J."/>
        </authorList>
    </citation>
    <scope>GENE FAMILY</scope>
    <scope>NOMENCLATURE</scope>
</reference>
<reference key="8">
    <citation type="journal article" date="2007" name="Plant Physiol.">
        <title>Characterization of stress-responsive CIPK genes in rice for stress tolerance improvement.</title>
        <authorList>
            <person name="Xiang Y."/>
            <person name="Huang Y."/>
            <person name="Xiong L."/>
        </authorList>
    </citation>
    <scope>FUNCTION</scope>
    <scope>INDUCTION</scope>
</reference>
<evidence type="ECO:0000250" key="1"/>
<evidence type="ECO:0000255" key="2">
    <source>
        <dbReference type="PROSITE-ProRule" id="PRU00159"/>
    </source>
</evidence>
<evidence type="ECO:0000255" key="3">
    <source>
        <dbReference type="PROSITE-ProRule" id="PRU00256"/>
    </source>
</evidence>
<evidence type="ECO:0000255" key="4">
    <source>
        <dbReference type="PROSITE-ProRule" id="PRU10027"/>
    </source>
</evidence>
<evidence type="ECO:0000256" key="5">
    <source>
        <dbReference type="SAM" id="MobiDB-lite"/>
    </source>
</evidence>
<evidence type="ECO:0000269" key="6">
    <source>
    </source>
</evidence>
<evidence type="ECO:0000269" key="7">
    <source>
    </source>
</evidence>
<evidence type="ECO:0000305" key="8"/>
<dbReference type="EC" id="2.7.11.1"/>
<dbReference type="EMBL" id="AB011968">
    <property type="protein sequence ID" value="BAA83689.1"/>
    <property type="status" value="ALT_SEQ"/>
    <property type="molecule type" value="Genomic_DNA"/>
</dbReference>
<dbReference type="EMBL" id="AP003256">
    <property type="protein sequence ID" value="BAB61201.1"/>
    <property type="status" value="ALT_SEQ"/>
    <property type="molecule type" value="Genomic_DNA"/>
</dbReference>
<dbReference type="EMBL" id="AP003409">
    <property type="protein sequence ID" value="BAD87598.1"/>
    <property type="molecule type" value="Genomic_DNA"/>
</dbReference>
<dbReference type="EMBL" id="AP008207">
    <property type="protein sequence ID" value="BAF06225.1"/>
    <property type="molecule type" value="Genomic_DNA"/>
</dbReference>
<dbReference type="EMBL" id="AP014957">
    <property type="protein sequence ID" value="BAS74440.1"/>
    <property type="molecule type" value="Genomic_DNA"/>
</dbReference>
<dbReference type="EMBL" id="AK101442">
    <property type="status" value="NOT_ANNOTATED_CDS"/>
    <property type="molecule type" value="mRNA"/>
</dbReference>
<dbReference type="RefSeq" id="XP_015616887.1">
    <property type="nucleotide sequence ID" value="XM_015761401.1"/>
</dbReference>
<dbReference type="SMR" id="Q5JLS2"/>
<dbReference type="FunCoup" id="Q5JLS2">
    <property type="interactions" value="234"/>
</dbReference>
<dbReference type="STRING" id="39947.Q5JLS2"/>
<dbReference type="PaxDb" id="39947-Q5JLS2"/>
<dbReference type="EnsemblPlants" id="Os01t0759400-02">
    <property type="protein sequence ID" value="Os01t0759400-02"/>
    <property type="gene ID" value="Os01g0759400"/>
</dbReference>
<dbReference type="Gramene" id="Os01t0759400-02">
    <property type="protein sequence ID" value="Os01t0759400-02"/>
    <property type="gene ID" value="Os01g0759400"/>
</dbReference>
<dbReference type="KEGG" id="dosa:Os01g0759400"/>
<dbReference type="eggNOG" id="KOG0583">
    <property type="taxonomic scope" value="Eukaryota"/>
</dbReference>
<dbReference type="HOGENOM" id="CLU_000288_59_0_1"/>
<dbReference type="InParanoid" id="Q5JLS2"/>
<dbReference type="OMA" id="FTFPEIM"/>
<dbReference type="OrthoDB" id="193931at2759"/>
<dbReference type="Proteomes" id="UP000000763">
    <property type="component" value="Chromosome 1"/>
</dbReference>
<dbReference type="Proteomes" id="UP000059680">
    <property type="component" value="Chromosome 1"/>
</dbReference>
<dbReference type="ExpressionAtlas" id="Q5JLS2">
    <property type="expression patterns" value="baseline and differential"/>
</dbReference>
<dbReference type="GO" id="GO:0005524">
    <property type="term" value="F:ATP binding"/>
    <property type="evidence" value="ECO:0007669"/>
    <property type="project" value="UniProtKB-KW"/>
</dbReference>
<dbReference type="GO" id="GO:0106310">
    <property type="term" value="F:protein serine kinase activity"/>
    <property type="evidence" value="ECO:0007669"/>
    <property type="project" value="RHEA"/>
</dbReference>
<dbReference type="GO" id="GO:0004674">
    <property type="term" value="F:protein serine/threonine kinase activity"/>
    <property type="evidence" value="ECO:0000318"/>
    <property type="project" value="GO_Central"/>
</dbReference>
<dbReference type="GO" id="GO:0007165">
    <property type="term" value="P:signal transduction"/>
    <property type="evidence" value="ECO:0000318"/>
    <property type="project" value="GO_Central"/>
</dbReference>
<dbReference type="CDD" id="cd12195">
    <property type="entry name" value="CIPK_C"/>
    <property type="match status" value="1"/>
</dbReference>
<dbReference type="CDD" id="cd14663">
    <property type="entry name" value="STKc_SnRK3"/>
    <property type="match status" value="1"/>
</dbReference>
<dbReference type="FunFam" id="1.10.510.10:FF:000653">
    <property type="entry name" value="Non-specific serine/threonine protein kinase"/>
    <property type="match status" value="1"/>
</dbReference>
<dbReference type="FunFam" id="3.30.200.20:FF:000096">
    <property type="entry name" value="Non-specific serine/threonine protein kinase"/>
    <property type="match status" value="1"/>
</dbReference>
<dbReference type="FunFam" id="3.30.310.80:FF:000005">
    <property type="entry name" value="Non-specific serine/threonine protein kinase"/>
    <property type="match status" value="1"/>
</dbReference>
<dbReference type="Gene3D" id="3.30.310.80">
    <property type="entry name" value="Kinase associated domain 1, KA1"/>
    <property type="match status" value="1"/>
</dbReference>
<dbReference type="Gene3D" id="1.10.510.10">
    <property type="entry name" value="Transferase(Phosphotransferase) domain 1"/>
    <property type="match status" value="1"/>
</dbReference>
<dbReference type="InterPro" id="IPR011009">
    <property type="entry name" value="Kinase-like_dom_sf"/>
</dbReference>
<dbReference type="InterPro" id="IPR018451">
    <property type="entry name" value="NAF/FISL_domain"/>
</dbReference>
<dbReference type="InterPro" id="IPR004041">
    <property type="entry name" value="NAF_dom"/>
</dbReference>
<dbReference type="InterPro" id="IPR000719">
    <property type="entry name" value="Prot_kinase_dom"/>
</dbReference>
<dbReference type="InterPro" id="IPR017441">
    <property type="entry name" value="Protein_kinase_ATP_BS"/>
</dbReference>
<dbReference type="InterPro" id="IPR008271">
    <property type="entry name" value="Ser/Thr_kinase_AS"/>
</dbReference>
<dbReference type="PANTHER" id="PTHR43895">
    <property type="entry name" value="CALCIUM/CALMODULIN-DEPENDENT PROTEIN KINASE KINASE-RELATED"/>
    <property type="match status" value="1"/>
</dbReference>
<dbReference type="PANTHER" id="PTHR43895:SF6">
    <property type="entry name" value="CBL-INTERACTING PROTEIN KINASE 19"/>
    <property type="match status" value="1"/>
</dbReference>
<dbReference type="Pfam" id="PF03822">
    <property type="entry name" value="NAF"/>
    <property type="match status" value="1"/>
</dbReference>
<dbReference type="Pfam" id="PF00069">
    <property type="entry name" value="Pkinase"/>
    <property type="match status" value="1"/>
</dbReference>
<dbReference type="SMART" id="SM00220">
    <property type="entry name" value="S_TKc"/>
    <property type="match status" value="1"/>
</dbReference>
<dbReference type="SUPFAM" id="SSF56112">
    <property type="entry name" value="Protein kinase-like (PK-like)"/>
    <property type="match status" value="1"/>
</dbReference>
<dbReference type="PROSITE" id="PS50816">
    <property type="entry name" value="NAF"/>
    <property type="match status" value="1"/>
</dbReference>
<dbReference type="PROSITE" id="PS00107">
    <property type="entry name" value="PROTEIN_KINASE_ATP"/>
    <property type="match status" value="1"/>
</dbReference>
<dbReference type="PROSITE" id="PS50011">
    <property type="entry name" value="PROTEIN_KINASE_DOM"/>
    <property type="match status" value="1"/>
</dbReference>
<dbReference type="PROSITE" id="PS00108">
    <property type="entry name" value="PROTEIN_KINASE_ST"/>
    <property type="match status" value="1"/>
</dbReference>
<organism>
    <name type="scientific">Oryza sativa subsp. japonica</name>
    <name type="common">Rice</name>
    <dbReference type="NCBI Taxonomy" id="39947"/>
    <lineage>
        <taxon>Eukaryota</taxon>
        <taxon>Viridiplantae</taxon>
        <taxon>Streptophyta</taxon>
        <taxon>Embryophyta</taxon>
        <taxon>Tracheophyta</taxon>
        <taxon>Spermatophyta</taxon>
        <taxon>Magnoliopsida</taxon>
        <taxon>Liliopsida</taxon>
        <taxon>Poales</taxon>
        <taxon>Poaceae</taxon>
        <taxon>BOP clade</taxon>
        <taxon>Oryzoideae</taxon>
        <taxon>Oryzeae</taxon>
        <taxon>Oryzinae</taxon>
        <taxon>Oryza</taxon>
        <taxon>Oryza sativa</taxon>
    </lineage>
</organism>